<keyword id="KW-0067">ATP-binding</keyword>
<keyword id="KW-0520">NAD</keyword>
<keyword id="KW-0547">Nucleotide-binding</keyword>
<keyword id="KW-0548">Nucleotidyltransferase</keyword>
<keyword id="KW-0662">Pyridine nucleotide biosynthesis</keyword>
<keyword id="KW-0808">Transferase</keyword>
<sequence length="217" mass="25040">MNLVTRPGRVGIMGGTFDPIHYGHLVTAEAARWEFALQKVIFVPSGRPPHKKDYPVTDAEYRYQMTLLATASNPYFEVSRSEIDREGFSYTVDTVAEFRREYGPEVQLYFITGADAILEILTWKDVDTLLRECHFIAATRPGFQLNRLEESRPQLPVEGRHRIHLIEVPALAISSTDIRWRVKNNKPIKYLLPEAVEEYIRSRGLYRPRLDGVYEKG</sequence>
<accession>Q2RKZ5</accession>
<proteinExistence type="inferred from homology"/>
<comment type="function">
    <text evidence="1">Catalyzes the reversible adenylation of nicotinate mononucleotide (NaMN) to nicotinic acid adenine dinucleotide (NaAD).</text>
</comment>
<comment type="catalytic activity">
    <reaction evidence="1">
        <text>nicotinate beta-D-ribonucleotide + ATP + H(+) = deamido-NAD(+) + diphosphate</text>
        <dbReference type="Rhea" id="RHEA:22860"/>
        <dbReference type="ChEBI" id="CHEBI:15378"/>
        <dbReference type="ChEBI" id="CHEBI:30616"/>
        <dbReference type="ChEBI" id="CHEBI:33019"/>
        <dbReference type="ChEBI" id="CHEBI:57502"/>
        <dbReference type="ChEBI" id="CHEBI:58437"/>
        <dbReference type="EC" id="2.7.7.18"/>
    </reaction>
</comment>
<comment type="pathway">
    <text evidence="1">Cofactor biosynthesis; NAD(+) biosynthesis; deamido-NAD(+) from nicotinate D-ribonucleotide: step 1/1.</text>
</comment>
<comment type="similarity">
    <text evidence="1">Belongs to the NadD family.</text>
</comment>
<organism>
    <name type="scientific">Moorella thermoacetica (strain ATCC 39073 / JCM 9320)</name>
    <dbReference type="NCBI Taxonomy" id="264732"/>
    <lineage>
        <taxon>Bacteria</taxon>
        <taxon>Bacillati</taxon>
        <taxon>Bacillota</taxon>
        <taxon>Clostridia</taxon>
        <taxon>Moorellales</taxon>
        <taxon>Moorellaceae</taxon>
        <taxon>Moorella</taxon>
    </lineage>
</organism>
<feature type="chain" id="PRO_0000336708" description="Probable nicotinate-nucleotide adenylyltransferase">
    <location>
        <begin position="1"/>
        <end position="217"/>
    </location>
</feature>
<dbReference type="EC" id="2.7.7.18" evidence="1"/>
<dbReference type="EMBL" id="CP000232">
    <property type="protein sequence ID" value="ABC18894.1"/>
    <property type="molecule type" value="Genomic_DNA"/>
</dbReference>
<dbReference type="RefSeq" id="YP_429437.1">
    <property type="nucleotide sequence ID" value="NC_007644.1"/>
</dbReference>
<dbReference type="SMR" id="Q2RKZ5"/>
<dbReference type="STRING" id="264732.Moth_0564"/>
<dbReference type="EnsemblBacteria" id="ABC18894">
    <property type="protein sequence ID" value="ABC18894"/>
    <property type="gene ID" value="Moth_0564"/>
</dbReference>
<dbReference type="KEGG" id="mta:Moth_0564"/>
<dbReference type="PATRIC" id="fig|264732.11.peg.607"/>
<dbReference type="eggNOG" id="COG1057">
    <property type="taxonomic scope" value="Bacteria"/>
</dbReference>
<dbReference type="HOGENOM" id="CLU_069765_1_0_9"/>
<dbReference type="OrthoDB" id="5295945at2"/>
<dbReference type="UniPathway" id="UPA00253">
    <property type="reaction ID" value="UER00332"/>
</dbReference>
<dbReference type="GO" id="GO:0005524">
    <property type="term" value="F:ATP binding"/>
    <property type="evidence" value="ECO:0007669"/>
    <property type="project" value="UniProtKB-KW"/>
</dbReference>
<dbReference type="GO" id="GO:0004515">
    <property type="term" value="F:nicotinate-nucleotide adenylyltransferase activity"/>
    <property type="evidence" value="ECO:0007669"/>
    <property type="project" value="UniProtKB-UniRule"/>
</dbReference>
<dbReference type="GO" id="GO:0009435">
    <property type="term" value="P:NAD biosynthetic process"/>
    <property type="evidence" value="ECO:0007669"/>
    <property type="project" value="UniProtKB-UniRule"/>
</dbReference>
<dbReference type="CDD" id="cd02165">
    <property type="entry name" value="NMNAT"/>
    <property type="match status" value="1"/>
</dbReference>
<dbReference type="FunFam" id="3.40.50.620:FF:000039">
    <property type="entry name" value="Probable nicotinate-nucleotide adenylyltransferase"/>
    <property type="match status" value="1"/>
</dbReference>
<dbReference type="Gene3D" id="3.40.50.620">
    <property type="entry name" value="HUPs"/>
    <property type="match status" value="1"/>
</dbReference>
<dbReference type="HAMAP" id="MF_00244">
    <property type="entry name" value="NaMN_adenylyltr"/>
    <property type="match status" value="1"/>
</dbReference>
<dbReference type="InterPro" id="IPR004821">
    <property type="entry name" value="Cyt_trans-like"/>
</dbReference>
<dbReference type="InterPro" id="IPR005248">
    <property type="entry name" value="NadD/NMNAT"/>
</dbReference>
<dbReference type="InterPro" id="IPR014729">
    <property type="entry name" value="Rossmann-like_a/b/a_fold"/>
</dbReference>
<dbReference type="NCBIfam" id="TIGR00125">
    <property type="entry name" value="cyt_tran_rel"/>
    <property type="match status" value="1"/>
</dbReference>
<dbReference type="NCBIfam" id="TIGR00482">
    <property type="entry name" value="nicotinate (nicotinamide) nucleotide adenylyltransferase"/>
    <property type="match status" value="1"/>
</dbReference>
<dbReference type="NCBIfam" id="NF000840">
    <property type="entry name" value="PRK00071.1-3"/>
    <property type="match status" value="1"/>
</dbReference>
<dbReference type="PANTHER" id="PTHR39321">
    <property type="entry name" value="NICOTINATE-NUCLEOTIDE ADENYLYLTRANSFERASE-RELATED"/>
    <property type="match status" value="1"/>
</dbReference>
<dbReference type="PANTHER" id="PTHR39321:SF3">
    <property type="entry name" value="PHOSPHOPANTETHEINE ADENYLYLTRANSFERASE"/>
    <property type="match status" value="1"/>
</dbReference>
<dbReference type="Pfam" id="PF01467">
    <property type="entry name" value="CTP_transf_like"/>
    <property type="match status" value="1"/>
</dbReference>
<dbReference type="SUPFAM" id="SSF52374">
    <property type="entry name" value="Nucleotidylyl transferase"/>
    <property type="match status" value="1"/>
</dbReference>
<name>NADD_MOOTA</name>
<gene>
    <name evidence="1" type="primary">nadD</name>
    <name type="ordered locus">Moth_0564</name>
</gene>
<evidence type="ECO:0000255" key="1">
    <source>
        <dbReference type="HAMAP-Rule" id="MF_00244"/>
    </source>
</evidence>
<protein>
    <recommendedName>
        <fullName evidence="1">Probable nicotinate-nucleotide adenylyltransferase</fullName>
        <ecNumber evidence="1">2.7.7.18</ecNumber>
    </recommendedName>
    <alternativeName>
        <fullName evidence="1">Deamido-NAD(+) diphosphorylase</fullName>
    </alternativeName>
    <alternativeName>
        <fullName evidence="1">Deamido-NAD(+) pyrophosphorylase</fullName>
    </alternativeName>
    <alternativeName>
        <fullName evidence="1">Nicotinate mononucleotide adenylyltransferase</fullName>
        <shortName evidence="1">NaMN adenylyltransferase</shortName>
    </alternativeName>
</protein>
<reference key="1">
    <citation type="journal article" date="2008" name="Environ. Microbiol.">
        <title>The complete genome sequence of Moorella thermoacetica (f. Clostridium thermoaceticum).</title>
        <authorList>
            <person name="Pierce E."/>
            <person name="Xie G."/>
            <person name="Barabote R.D."/>
            <person name="Saunders E."/>
            <person name="Han C.S."/>
            <person name="Detter J.C."/>
            <person name="Richardson P."/>
            <person name="Brettin T.S."/>
            <person name="Das A."/>
            <person name="Ljungdahl L.G."/>
            <person name="Ragsdale S.W."/>
        </authorList>
    </citation>
    <scope>NUCLEOTIDE SEQUENCE [LARGE SCALE GENOMIC DNA]</scope>
    <source>
        <strain>ATCC 39073 / JCM 9320</strain>
    </source>
</reference>